<evidence type="ECO:0000255" key="1">
    <source>
        <dbReference type="HAMAP-Rule" id="MF_00495"/>
    </source>
</evidence>
<accession>Q4UVL3</accession>
<keyword id="KW-0119">Carbohydrate metabolism</keyword>
<keyword id="KW-0378">Hydrolase</keyword>
<keyword id="KW-0460">Magnesium</keyword>
<keyword id="KW-0479">Metal-binding</keyword>
<proteinExistence type="inferred from homology"/>
<comment type="function">
    <text evidence="1">Specifically catalyzes the dephosphorylation of 2-phosphoglycolate. Is involved in the dissimilation of the intracellular 2-phosphoglycolate formed during the DNA repair of 3'-phosphoglycolate ends, a major class of DNA lesions induced by oxidative stress.</text>
</comment>
<comment type="catalytic activity">
    <reaction evidence="1">
        <text>2-phosphoglycolate + H2O = glycolate + phosphate</text>
        <dbReference type="Rhea" id="RHEA:14369"/>
        <dbReference type="ChEBI" id="CHEBI:15377"/>
        <dbReference type="ChEBI" id="CHEBI:29805"/>
        <dbReference type="ChEBI" id="CHEBI:43474"/>
        <dbReference type="ChEBI" id="CHEBI:58033"/>
        <dbReference type="EC" id="3.1.3.18"/>
    </reaction>
</comment>
<comment type="cofactor">
    <cofactor evidence="1">
        <name>Mg(2+)</name>
        <dbReference type="ChEBI" id="CHEBI:18420"/>
    </cofactor>
</comment>
<comment type="pathway">
    <text evidence="1">Organic acid metabolism; glycolate biosynthesis; glycolate from 2-phosphoglycolate: step 1/1.</text>
</comment>
<comment type="similarity">
    <text evidence="1">Belongs to the HAD-like hydrolase superfamily. CbbY/CbbZ/Gph/YieH family.</text>
</comment>
<dbReference type="EC" id="3.1.3.18" evidence="1"/>
<dbReference type="EMBL" id="CP000050">
    <property type="protein sequence ID" value="AAY48910.1"/>
    <property type="molecule type" value="Genomic_DNA"/>
</dbReference>
<dbReference type="RefSeq" id="WP_011037412.1">
    <property type="nucleotide sequence ID" value="NZ_CP155948.1"/>
</dbReference>
<dbReference type="SMR" id="Q4UVL3"/>
<dbReference type="KEGG" id="xcb:XC_1847"/>
<dbReference type="HOGENOM" id="CLU_045011_19_1_6"/>
<dbReference type="UniPathway" id="UPA00865">
    <property type="reaction ID" value="UER00834"/>
</dbReference>
<dbReference type="Proteomes" id="UP000000420">
    <property type="component" value="Chromosome"/>
</dbReference>
<dbReference type="GO" id="GO:0005829">
    <property type="term" value="C:cytosol"/>
    <property type="evidence" value="ECO:0007669"/>
    <property type="project" value="TreeGrafter"/>
</dbReference>
<dbReference type="GO" id="GO:0046872">
    <property type="term" value="F:metal ion binding"/>
    <property type="evidence" value="ECO:0007669"/>
    <property type="project" value="UniProtKB-KW"/>
</dbReference>
<dbReference type="GO" id="GO:0008967">
    <property type="term" value="F:phosphoglycolate phosphatase activity"/>
    <property type="evidence" value="ECO:0007669"/>
    <property type="project" value="UniProtKB-UniRule"/>
</dbReference>
<dbReference type="GO" id="GO:0005975">
    <property type="term" value="P:carbohydrate metabolic process"/>
    <property type="evidence" value="ECO:0007669"/>
    <property type="project" value="InterPro"/>
</dbReference>
<dbReference type="GO" id="GO:0006281">
    <property type="term" value="P:DNA repair"/>
    <property type="evidence" value="ECO:0007669"/>
    <property type="project" value="TreeGrafter"/>
</dbReference>
<dbReference type="GO" id="GO:0046295">
    <property type="term" value="P:glycolate biosynthetic process"/>
    <property type="evidence" value="ECO:0007669"/>
    <property type="project" value="UniProtKB-UniRule"/>
</dbReference>
<dbReference type="FunFam" id="3.40.50.1000:FF:000022">
    <property type="entry name" value="Phosphoglycolate phosphatase"/>
    <property type="match status" value="1"/>
</dbReference>
<dbReference type="Gene3D" id="3.40.50.1000">
    <property type="entry name" value="HAD superfamily/HAD-like"/>
    <property type="match status" value="1"/>
</dbReference>
<dbReference type="Gene3D" id="1.10.150.240">
    <property type="entry name" value="Putative phosphatase, domain 2"/>
    <property type="match status" value="1"/>
</dbReference>
<dbReference type="HAMAP" id="MF_00495">
    <property type="entry name" value="GPH_hydrolase_bact"/>
    <property type="match status" value="1"/>
</dbReference>
<dbReference type="InterPro" id="IPR050155">
    <property type="entry name" value="HAD-like_hydrolase_sf"/>
</dbReference>
<dbReference type="InterPro" id="IPR036412">
    <property type="entry name" value="HAD-like_sf"/>
</dbReference>
<dbReference type="InterPro" id="IPR006439">
    <property type="entry name" value="HAD-SF_hydro_IA"/>
</dbReference>
<dbReference type="InterPro" id="IPR041492">
    <property type="entry name" value="HAD_2"/>
</dbReference>
<dbReference type="InterPro" id="IPR023214">
    <property type="entry name" value="HAD_sf"/>
</dbReference>
<dbReference type="InterPro" id="IPR023198">
    <property type="entry name" value="PGP-like_dom2"/>
</dbReference>
<dbReference type="InterPro" id="IPR037512">
    <property type="entry name" value="PGPase_prok"/>
</dbReference>
<dbReference type="NCBIfam" id="TIGR01549">
    <property type="entry name" value="HAD-SF-IA-v1"/>
    <property type="match status" value="1"/>
</dbReference>
<dbReference type="NCBIfam" id="TIGR01509">
    <property type="entry name" value="HAD-SF-IA-v3"/>
    <property type="match status" value="1"/>
</dbReference>
<dbReference type="NCBIfam" id="TIGR01449">
    <property type="entry name" value="PGP_bact"/>
    <property type="match status" value="1"/>
</dbReference>
<dbReference type="NCBIfam" id="NF009700">
    <property type="entry name" value="PRK13226.1"/>
    <property type="match status" value="1"/>
</dbReference>
<dbReference type="PANTHER" id="PTHR43434">
    <property type="entry name" value="PHOSPHOGLYCOLATE PHOSPHATASE"/>
    <property type="match status" value="1"/>
</dbReference>
<dbReference type="PANTHER" id="PTHR43434:SF23">
    <property type="entry name" value="PHOSPHOGLYCOLATE PHOSPHATASE"/>
    <property type="match status" value="1"/>
</dbReference>
<dbReference type="Pfam" id="PF13419">
    <property type="entry name" value="HAD_2"/>
    <property type="match status" value="1"/>
</dbReference>
<dbReference type="PRINTS" id="PR00413">
    <property type="entry name" value="HADHALOGNASE"/>
</dbReference>
<dbReference type="SFLD" id="SFLDG01135">
    <property type="entry name" value="C1.5.6:_HAD__Beta-PGM__Phospha"/>
    <property type="match status" value="1"/>
</dbReference>
<dbReference type="SFLD" id="SFLDS00003">
    <property type="entry name" value="Haloacid_Dehalogenase"/>
    <property type="match status" value="1"/>
</dbReference>
<dbReference type="SUPFAM" id="SSF56784">
    <property type="entry name" value="HAD-like"/>
    <property type="match status" value="1"/>
</dbReference>
<gene>
    <name type="ordered locus">XC_1847</name>
</gene>
<reference key="1">
    <citation type="journal article" date="2005" name="Genome Res.">
        <title>Comparative and functional genomic analyses of the pathogenicity of phytopathogen Xanthomonas campestris pv. campestris.</title>
        <authorList>
            <person name="Qian W."/>
            <person name="Jia Y."/>
            <person name="Ren S.-X."/>
            <person name="He Y.-Q."/>
            <person name="Feng J.-X."/>
            <person name="Lu L.-F."/>
            <person name="Sun Q."/>
            <person name="Ying G."/>
            <person name="Tang D.-J."/>
            <person name="Tang H."/>
            <person name="Wu W."/>
            <person name="Hao P."/>
            <person name="Wang L."/>
            <person name="Jiang B.-L."/>
            <person name="Zeng S."/>
            <person name="Gu W.-Y."/>
            <person name="Lu G."/>
            <person name="Rong L."/>
            <person name="Tian Y."/>
            <person name="Yao Z."/>
            <person name="Fu G."/>
            <person name="Chen B."/>
            <person name="Fang R."/>
            <person name="Qiang B."/>
            <person name="Chen Z."/>
            <person name="Zhao G.-P."/>
            <person name="Tang J.-L."/>
            <person name="He C."/>
        </authorList>
    </citation>
    <scope>NUCLEOTIDE SEQUENCE [LARGE SCALE GENOMIC DNA]</scope>
    <source>
        <strain>8004</strain>
    </source>
</reference>
<name>GPH_XANC8</name>
<feature type="chain" id="PRO_0000238183" description="Phosphoglycolate phosphatase">
    <location>
        <begin position="1"/>
        <end position="221"/>
    </location>
</feature>
<feature type="active site" description="Nucleophile" evidence="1">
    <location>
        <position position="10"/>
    </location>
</feature>
<feature type="binding site" evidence="1">
    <location>
        <position position="10"/>
    </location>
    <ligand>
        <name>Mg(2+)</name>
        <dbReference type="ChEBI" id="CHEBI:18420"/>
    </ligand>
</feature>
<feature type="binding site" evidence="1">
    <location>
        <position position="12"/>
    </location>
    <ligand>
        <name>Mg(2+)</name>
        <dbReference type="ChEBI" id="CHEBI:18420"/>
    </ligand>
</feature>
<feature type="binding site" evidence="1">
    <location>
        <position position="168"/>
    </location>
    <ligand>
        <name>Mg(2+)</name>
        <dbReference type="ChEBI" id="CHEBI:18420"/>
    </ligand>
</feature>
<protein>
    <recommendedName>
        <fullName evidence="1">Phosphoglycolate phosphatase</fullName>
        <shortName evidence="1">PGP</shortName>
        <shortName evidence="1">PGPase</shortName>
        <ecNumber evidence="1">3.1.3.18</ecNumber>
    </recommendedName>
</protein>
<organism>
    <name type="scientific">Xanthomonas campestris pv. campestris (strain 8004)</name>
    <dbReference type="NCBI Taxonomy" id="314565"/>
    <lineage>
        <taxon>Bacteria</taxon>
        <taxon>Pseudomonadati</taxon>
        <taxon>Pseudomonadota</taxon>
        <taxon>Gammaproteobacteria</taxon>
        <taxon>Lysobacterales</taxon>
        <taxon>Lysobacteraceae</taxon>
        <taxon>Xanthomonas</taxon>
    </lineage>
</organism>
<sequence>MRFPRAVLFDLDGTLLDSAPDMLATVNAMLSERGLPCITLAQLRPVVSKGSRAMLAVAFAHLDAAAREALVPEFLKRYEALLGTQAQLFDGVEVMLQRLEQAGCVWGIVTNKPEYLAQLILPQLGWQQRCAVLIGGDTLAERKPHPLPLLVAADRIGVAATQCVYVGDDERDILAARAAGMPSVAALWGYRLGDDDPLSWQADVLVEQPPQLWEPAAWPQP</sequence>